<name>RS17_DEIRA</name>
<proteinExistence type="inferred from homology"/>
<sequence length="96" mass="10782">MKKTFTGVVVSDKADKTVSVKVERRFAHPLYGKVVTRSHKYAAHDENNEYKIGDRVEIIAVRPISKTKTWKVTKLIERPRGIETTLAETEVAGGEA</sequence>
<organism>
    <name type="scientific">Deinococcus radiodurans (strain ATCC 13939 / DSM 20539 / JCM 16871 / CCUG 27074 / LMG 4051 / NBRC 15346 / NCIMB 9279 / VKM B-1422 / R1)</name>
    <dbReference type="NCBI Taxonomy" id="243230"/>
    <lineage>
        <taxon>Bacteria</taxon>
        <taxon>Thermotogati</taxon>
        <taxon>Deinococcota</taxon>
        <taxon>Deinococci</taxon>
        <taxon>Deinococcales</taxon>
        <taxon>Deinococcaceae</taxon>
        <taxon>Deinococcus</taxon>
    </lineage>
</organism>
<keyword id="KW-1185">Reference proteome</keyword>
<keyword id="KW-0687">Ribonucleoprotein</keyword>
<keyword id="KW-0689">Ribosomal protein</keyword>
<keyword id="KW-0694">RNA-binding</keyword>
<keyword id="KW-0699">rRNA-binding</keyword>
<comment type="function">
    <text evidence="1">One of the primary rRNA binding proteins, it binds specifically to the 5'-end of 16S ribosomal RNA.</text>
</comment>
<comment type="subunit">
    <text evidence="1">Part of the 30S ribosomal subunit.</text>
</comment>
<comment type="similarity">
    <text evidence="1">Belongs to the universal ribosomal protein uS17 family.</text>
</comment>
<dbReference type="EMBL" id="AE000513">
    <property type="protein sequence ID" value="AAF09901.1"/>
    <property type="molecule type" value="Genomic_DNA"/>
</dbReference>
<dbReference type="PIR" id="H75534">
    <property type="entry name" value="H75534"/>
</dbReference>
<dbReference type="RefSeq" id="NP_294043.1">
    <property type="nucleotide sequence ID" value="NC_001263.1"/>
</dbReference>
<dbReference type="RefSeq" id="WP_010886965.1">
    <property type="nucleotide sequence ID" value="NZ_JMLF01000001.1"/>
</dbReference>
<dbReference type="SMR" id="Q9RXJ3"/>
<dbReference type="FunCoup" id="Q9RXJ3">
    <property type="interactions" value="376"/>
</dbReference>
<dbReference type="STRING" id="243230.DR_0320"/>
<dbReference type="PaxDb" id="243230-DR_0320"/>
<dbReference type="EnsemblBacteria" id="AAF09901">
    <property type="protein sequence ID" value="AAF09901"/>
    <property type="gene ID" value="DR_0320"/>
</dbReference>
<dbReference type="GeneID" id="69516552"/>
<dbReference type="KEGG" id="dra:DR_0320"/>
<dbReference type="PATRIC" id="fig|243230.17.peg.486"/>
<dbReference type="eggNOG" id="COG0186">
    <property type="taxonomic scope" value="Bacteria"/>
</dbReference>
<dbReference type="HOGENOM" id="CLU_073626_1_2_0"/>
<dbReference type="InParanoid" id="Q9RXJ3"/>
<dbReference type="OrthoDB" id="9811714at2"/>
<dbReference type="Proteomes" id="UP000002524">
    <property type="component" value="Chromosome 1"/>
</dbReference>
<dbReference type="GO" id="GO:0022627">
    <property type="term" value="C:cytosolic small ribosomal subunit"/>
    <property type="evidence" value="ECO:0000318"/>
    <property type="project" value="GO_Central"/>
</dbReference>
<dbReference type="GO" id="GO:0019843">
    <property type="term" value="F:rRNA binding"/>
    <property type="evidence" value="ECO:0007669"/>
    <property type="project" value="UniProtKB-UniRule"/>
</dbReference>
<dbReference type="GO" id="GO:0003735">
    <property type="term" value="F:structural constituent of ribosome"/>
    <property type="evidence" value="ECO:0000318"/>
    <property type="project" value="GO_Central"/>
</dbReference>
<dbReference type="GO" id="GO:0006412">
    <property type="term" value="P:translation"/>
    <property type="evidence" value="ECO:0007669"/>
    <property type="project" value="UniProtKB-UniRule"/>
</dbReference>
<dbReference type="CDD" id="cd00364">
    <property type="entry name" value="Ribosomal_uS17"/>
    <property type="match status" value="1"/>
</dbReference>
<dbReference type="FunFam" id="2.40.50.140:FF:000311">
    <property type="entry name" value="30S ribosomal protein S17"/>
    <property type="match status" value="1"/>
</dbReference>
<dbReference type="Gene3D" id="2.40.50.140">
    <property type="entry name" value="Nucleic acid-binding proteins"/>
    <property type="match status" value="1"/>
</dbReference>
<dbReference type="HAMAP" id="MF_01345_B">
    <property type="entry name" value="Ribosomal_uS17_B"/>
    <property type="match status" value="1"/>
</dbReference>
<dbReference type="InterPro" id="IPR012340">
    <property type="entry name" value="NA-bd_OB-fold"/>
</dbReference>
<dbReference type="InterPro" id="IPR000266">
    <property type="entry name" value="Ribosomal_uS17"/>
</dbReference>
<dbReference type="InterPro" id="IPR019984">
    <property type="entry name" value="Ribosomal_uS17_bact/chlr"/>
</dbReference>
<dbReference type="NCBIfam" id="NF004123">
    <property type="entry name" value="PRK05610.1"/>
    <property type="match status" value="1"/>
</dbReference>
<dbReference type="NCBIfam" id="TIGR03635">
    <property type="entry name" value="uS17_bact"/>
    <property type="match status" value="1"/>
</dbReference>
<dbReference type="PANTHER" id="PTHR10744">
    <property type="entry name" value="40S RIBOSOMAL PROTEIN S11 FAMILY MEMBER"/>
    <property type="match status" value="1"/>
</dbReference>
<dbReference type="PANTHER" id="PTHR10744:SF1">
    <property type="entry name" value="SMALL RIBOSOMAL SUBUNIT PROTEIN US17M"/>
    <property type="match status" value="1"/>
</dbReference>
<dbReference type="Pfam" id="PF00366">
    <property type="entry name" value="Ribosomal_S17"/>
    <property type="match status" value="1"/>
</dbReference>
<dbReference type="PRINTS" id="PR00973">
    <property type="entry name" value="RIBOSOMALS17"/>
</dbReference>
<dbReference type="SUPFAM" id="SSF50249">
    <property type="entry name" value="Nucleic acid-binding proteins"/>
    <property type="match status" value="1"/>
</dbReference>
<gene>
    <name evidence="1" type="primary">rpsQ</name>
    <name type="ordered locus">DR_0320</name>
</gene>
<feature type="chain" id="PRO_0000233471" description="Small ribosomal subunit protein uS17">
    <location>
        <begin position="1"/>
        <end position="96"/>
    </location>
</feature>
<evidence type="ECO:0000255" key="1">
    <source>
        <dbReference type="HAMAP-Rule" id="MF_01345"/>
    </source>
</evidence>
<evidence type="ECO:0000305" key="2"/>
<accession>Q9RXJ3</accession>
<reference key="1">
    <citation type="journal article" date="1999" name="Science">
        <title>Genome sequence of the radioresistant bacterium Deinococcus radiodurans R1.</title>
        <authorList>
            <person name="White O."/>
            <person name="Eisen J.A."/>
            <person name="Heidelberg J.F."/>
            <person name="Hickey E.K."/>
            <person name="Peterson J.D."/>
            <person name="Dodson R.J."/>
            <person name="Haft D.H."/>
            <person name="Gwinn M.L."/>
            <person name="Nelson W.C."/>
            <person name="Richardson D.L."/>
            <person name="Moffat K.S."/>
            <person name="Qin H."/>
            <person name="Jiang L."/>
            <person name="Pamphile W."/>
            <person name="Crosby M."/>
            <person name="Shen M."/>
            <person name="Vamathevan J.J."/>
            <person name="Lam P."/>
            <person name="McDonald L.A."/>
            <person name="Utterback T.R."/>
            <person name="Zalewski C."/>
            <person name="Makarova K.S."/>
            <person name="Aravind L."/>
            <person name="Daly M.J."/>
            <person name="Minton K.W."/>
            <person name="Fleischmann R.D."/>
            <person name="Ketchum K.A."/>
            <person name="Nelson K.E."/>
            <person name="Salzberg S.L."/>
            <person name="Smith H.O."/>
            <person name="Venter J.C."/>
            <person name="Fraser C.M."/>
        </authorList>
    </citation>
    <scope>NUCLEOTIDE SEQUENCE [LARGE SCALE GENOMIC DNA]</scope>
    <source>
        <strain>ATCC 13939 / DSM 20539 / JCM 16871 / CCUG 27074 / LMG 4051 / NBRC 15346 / NCIMB 9279 / VKM B-1422 / R1</strain>
    </source>
</reference>
<protein>
    <recommendedName>
        <fullName evidence="1">Small ribosomal subunit protein uS17</fullName>
    </recommendedName>
    <alternativeName>
        <fullName evidence="2">30S ribosomal protein S17</fullName>
    </alternativeName>
</protein>